<keyword id="KW-0028">Amino-acid biosynthesis</keyword>
<keyword id="KW-0057">Aromatic amino acid biosynthesis</keyword>
<keyword id="KW-0521">NADP</keyword>
<keyword id="KW-0560">Oxidoreductase</keyword>
<keyword id="KW-1185">Reference proteome</keyword>
<name>AROE_SULTO</name>
<proteinExistence type="inferred from homology"/>
<reference key="1">
    <citation type="journal article" date="2001" name="DNA Res.">
        <title>Complete genome sequence of an aerobic thermoacidophilic Crenarchaeon, Sulfolobus tokodaii strain7.</title>
        <authorList>
            <person name="Kawarabayasi Y."/>
            <person name="Hino Y."/>
            <person name="Horikawa H."/>
            <person name="Jin-no K."/>
            <person name="Takahashi M."/>
            <person name="Sekine M."/>
            <person name="Baba S."/>
            <person name="Ankai A."/>
            <person name="Kosugi H."/>
            <person name="Hosoyama A."/>
            <person name="Fukui S."/>
            <person name="Nagai Y."/>
            <person name="Nishijima K."/>
            <person name="Otsuka R."/>
            <person name="Nakazawa H."/>
            <person name="Takamiya M."/>
            <person name="Kato Y."/>
            <person name="Yoshizawa T."/>
            <person name="Tanaka T."/>
            <person name="Kudoh Y."/>
            <person name="Yamazaki J."/>
            <person name="Kushida N."/>
            <person name="Oguchi A."/>
            <person name="Aoki K."/>
            <person name="Masuda S."/>
            <person name="Yanagii M."/>
            <person name="Nishimura M."/>
            <person name="Yamagishi A."/>
            <person name="Oshima T."/>
            <person name="Kikuchi H."/>
        </authorList>
    </citation>
    <scope>NUCLEOTIDE SEQUENCE [LARGE SCALE GENOMIC DNA]</scope>
    <source>
        <strain>DSM 16993 / JCM 10545 / NBRC 100140 / 7</strain>
    </source>
</reference>
<sequence length="260" mass="29435">MLEINYDTKLLGVVGENISYTLSPAIHNYSFQELGINAVYLAFDIKSDEFKEIFPGLVKIAYGLNITIPYKEIAIKYVEAQSEAKRIGAINTIFNGKGYNTDYIAIKSLVQERIDKFETCTIFGAGGAARAAIFALHDLDCSINVINRSKEKAEKLIEEMRNKNIEIKITYNCKSDIIVNSTPNPDFVPDECVNGKLVIDFVYKPVITSLIKRAQNKNIKTINGIEILVRQAMEAEKIWFGKSLEDEEVVNYLYARKLIW</sequence>
<feature type="chain" id="PRO_0000325185" description="Shikimate dehydrogenase">
    <location>
        <begin position="1"/>
        <end position="260"/>
    </location>
</feature>
<feature type="active site" description="Proton acceptor" evidence="2">
    <location>
        <position position="71"/>
    </location>
</feature>
<feature type="binding site" evidence="1">
    <location>
        <begin position="124"/>
        <end position="128"/>
    </location>
    <ligand>
        <name>NADP(+)</name>
        <dbReference type="ChEBI" id="CHEBI:58349"/>
    </ligand>
</feature>
<evidence type="ECO:0000250" key="1"/>
<evidence type="ECO:0000255" key="2"/>
<evidence type="ECO:0000305" key="3"/>
<organism>
    <name type="scientific">Sulfurisphaera tokodaii (strain DSM 16993 / JCM 10545 / NBRC 100140 / 7)</name>
    <name type="common">Sulfolobus tokodaii</name>
    <dbReference type="NCBI Taxonomy" id="273063"/>
    <lineage>
        <taxon>Archaea</taxon>
        <taxon>Thermoproteota</taxon>
        <taxon>Thermoprotei</taxon>
        <taxon>Sulfolobales</taxon>
        <taxon>Sulfolobaceae</taxon>
        <taxon>Sulfurisphaera</taxon>
    </lineage>
</organism>
<comment type="catalytic activity">
    <reaction>
        <text>shikimate + NADP(+) = 3-dehydroshikimate + NADPH + H(+)</text>
        <dbReference type="Rhea" id="RHEA:17737"/>
        <dbReference type="ChEBI" id="CHEBI:15378"/>
        <dbReference type="ChEBI" id="CHEBI:16630"/>
        <dbReference type="ChEBI" id="CHEBI:36208"/>
        <dbReference type="ChEBI" id="CHEBI:57783"/>
        <dbReference type="ChEBI" id="CHEBI:58349"/>
        <dbReference type="EC" id="1.1.1.25"/>
    </reaction>
</comment>
<comment type="pathway">
    <text>Metabolic intermediate biosynthesis; chorismate biosynthesis; chorismate from D-erythrose 4-phosphate and phosphoenolpyruvate: step 4/7.</text>
</comment>
<comment type="similarity">
    <text evidence="3">Belongs to the shikimate dehydrogenase family.</text>
</comment>
<gene>
    <name type="primary">aroE</name>
    <name type="ordered locus">STK_22730</name>
</gene>
<dbReference type="EC" id="1.1.1.25"/>
<dbReference type="EMBL" id="BA000023">
    <property type="protein sequence ID" value="BAB67382.1"/>
    <property type="molecule type" value="Genomic_DNA"/>
</dbReference>
<dbReference type="RefSeq" id="WP_010980357.1">
    <property type="nucleotide sequence ID" value="NC_003106.2"/>
</dbReference>
<dbReference type="SMR" id="Q96Y95"/>
<dbReference type="STRING" id="273063.STK_22730"/>
<dbReference type="GeneID" id="1460355"/>
<dbReference type="KEGG" id="sto:STK_22730"/>
<dbReference type="PATRIC" id="fig|273063.9.peg.2577"/>
<dbReference type="eggNOG" id="arCOG01033">
    <property type="taxonomic scope" value="Archaea"/>
</dbReference>
<dbReference type="OrthoDB" id="8744at2157"/>
<dbReference type="UniPathway" id="UPA00053">
    <property type="reaction ID" value="UER00087"/>
</dbReference>
<dbReference type="Proteomes" id="UP000001015">
    <property type="component" value="Chromosome"/>
</dbReference>
<dbReference type="GO" id="GO:0004764">
    <property type="term" value="F:shikimate 3-dehydrogenase (NADP+) activity"/>
    <property type="evidence" value="ECO:0007669"/>
    <property type="project" value="UniProtKB-UniRule"/>
</dbReference>
<dbReference type="GO" id="GO:0008652">
    <property type="term" value="P:amino acid biosynthetic process"/>
    <property type="evidence" value="ECO:0007669"/>
    <property type="project" value="UniProtKB-KW"/>
</dbReference>
<dbReference type="GO" id="GO:0009073">
    <property type="term" value="P:aromatic amino acid family biosynthetic process"/>
    <property type="evidence" value="ECO:0007669"/>
    <property type="project" value="UniProtKB-KW"/>
</dbReference>
<dbReference type="GO" id="GO:0009423">
    <property type="term" value="P:chorismate biosynthetic process"/>
    <property type="evidence" value="ECO:0007669"/>
    <property type="project" value="UniProtKB-UniRule"/>
</dbReference>
<dbReference type="GO" id="GO:0019632">
    <property type="term" value="P:shikimate metabolic process"/>
    <property type="evidence" value="ECO:0007669"/>
    <property type="project" value="TreeGrafter"/>
</dbReference>
<dbReference type="Gene3D" id="3.40.50.10860">
    <property type="entry name" value="Leucine Dehydrogenase, chain A, domain 1"/>
    <property type="match status" value="1"/>
</dbReference>
<dbReference type="Gene3D" id="3.40.50.720">
    <property type="entry name" value="NAD(P)-binding Rossmann-like Domain"/>
    <property type="match status" value="1"/>
</dbReference>
<dbReference type="InterPro" id="IPR046346">
    <property type="entry name" value="Aminoacid_DH-like_N_sf"/>
</dbReference>
<dbReference type="InterPro" id="IPR036291">
    <property type="entry name" value="NAD(P)-bd_dom_sf"/>
</dbReference>
<dbReference type="InterPro" id="IPR013708">
    <property type="entry name" value="Shikimate_DH-bd_N"/>
</dbReference>
<dbReference type="InterPro" id="IPR022893">
    <property type="entry name" value="Shikimate_DH_fam"/>
</dbReference>
<dbReference type="InterPro" id="IPR006151">
    <property type="entry name" value="Shikm_DH/Glu-tRNA_Rdtase"/>
</dbReference>
<dbReference type="PANTHER" id="PTHR21089:SF1">
    <property type="entry name" value="BIFUNCTIONAL 3-DEHYDROQUINATE DEHYDRATASE_SHIKIMATE DEHYDROGENASE, CHLOROPLASTIC"/>
    <property type="match status" value="1"/>
</dbReference>
<dbReference type="PANTHER" id="PTHR21089">
    <property type="entry name" value="SHIKIMATE DEHYDROGENASE"/>
    <property type="match status" value="1"/>
</dbReference>
<dbReference type="Pfam" id="PF01488">
    <property type="entry name" value="Shikimate_DH"/>
    <property type="match status" value="1"/>
</dbReference>
<dbReference type="Pfam" id="PF08501">
    <property type="entry name" value="Shikimate_dh_N"/>
    <property type="match status" value="1"/>
</dbReference>
<dbReference type="SUPFAM" id="SSF53223">
    <property type="entry name" value="Aminoacid dehydrogenase-like, N-terminal domain"/>
    <property type="match status" value="1"/>
</dbReference>
<dbReference type="SUPFAM" id="SSF51735">
    <property type="entry name" value="NAD(P)-binding Rossmann-fold domains"/>
    <property type="match status" value="1"/>
</dbReference>
<accession>Q96Y95</accession>
<protein>
    <recommendedName>
        <fullName>Shikimate dehydrogenase</fullName>
        <ecNumber>1.1.1.25</ecNumber>
    </recommendedName>
</protein>